<comment type="function">
    <text evidence="2">Protein kinase that regulates many aspects of mycobacterial physiology. Is a key component of a signal transduction pathway that regulates cell growth, cell shape and cell division via phosphorylation of target proteins.</text>
</comment>
<comment type="catalytic activity">
    <reaction>
        <text>L-seryl-[protein] + ATP = O-phospho-L-seryl-[protein] + ADP + H(+)</text>
        <dbReference type="Rhea" id="RHEA:17989"/>
        <dbReference type="Rhea" id="RHEA-COMP:9863"/>
        <dbReference type="Rhea" id="RHEA-COMP:11604"/>
        <dbReference type="ChEBI" id="CHEBI:15378"/>
        <dbReference type="ChEBI" id="CHEBI:29999"/>
        <dbReference type="ChEBI" id="CHEBI:30616"/>
        <dbReference type="ChEBI" id="CHEBI:83421"/>
        <dbReference type="ChEBI" id="CHEBI:456216"/>
        <dbReference type="EC" id="2.7.11.1"/>
    </reaction>
</comment>
<comment type="catalytic activity">
    <reaction>
        <text>L-threonyl-[protein] + ATP = O-phospho-L-threonyl-[protein] + ADP + H(+)</text>
        <dbReference type="Rhea" id="RHEA:46608"/>
        <dbReference type="Rhea" id="RHEA-COMP:11060"/>
        <dbReference type="Rhea" id="RHEA-COMP:11605"/>
        <dbReference type="ChEBI" id="CHEBI:15378"/>
        <dbReference type="ChEBI" id="CHEBI:30013"/>
        <dbReference type="ChEBI" id="CHEBI:30616"/>
        <dbReference type="ChEBI" id="CHEBI:61977"/>
        <dbReference type="ChEBI" id="CHEBI:456216"/>
        <dbReference type="EC" id="2.7.11.1"/>
    </reaction>
</comment>
<comment type="subcellular location">
    <subcellularLocation>
        <location evidence="1">Cell membrane</location>
        <topology evidence="1">Single-pass membrane protein</topology>
    </subcellularLocation>
</comment>
<comment type="PTM">
    <text evidence="1">Autophosphorylated. Dephosphorylated by PstP (By similarity).</text>
</comment>
<comment type="similarity">
    <text evidence="4">Belongs to the protein kinase superfamily. Ser/Thr protein kinase family.</text>
</comment>
<reference key="1">
    <citation type="journal article" date="2002" name="J. Bacteriol.">
        <title>Whole-genome comparison of Mycobacterium tuberculosis clinical and laboratory strains.</title>
        <authorList>
            <person name="Fleischmann R.D."/>
            <person name="Alland D."/>
            <person name="Eisen J.A."/>
            <person name="Carpenter L."/>
            <person name="White O."/>
            <person name="Peterson J.D."/>
            <person name="DeBoy R.T."/>
            <person name="Dodson R.J."/>
            <person name="Gwinn M.L."/>
            <person name="Haft D.H."/>
            <person name="Hickey E.K."/>
            <person name="Kolonay J.F."/>
            <person name="Nelson W.C."/>
            <person name="Umayam L.A."/>
            <person name="Ermolaeva M.D."/>
            <person name="Salzberg S.L."/>
            <person name="Delcher A."/>
            <person name="Utterback T.R."/>
            <person name="Weidman J.F."/>
            <person name="Khouri H.M."/>
            <person name="Gill J."/>
            <person name="Mikula A."/>
            <person name="Bishai W."/>
            <person name="Jacobs W.R. Jr."/>
            <person name="Venter J.C."/>
            <person name="Fraser C.M."/>
        </authorList>
    </citation>
    <scope>NUCLEOTIDE SEQUENCE [LARGE SCALE GENOMIC DNA]</scope>
    <source>
        <strain>CDC 1551 / Oshkosh</strain>
    </source>
</reference>
<protein>
    <recommendedName>
        <fullName>Serine/threonine-protein kinase PknA</fullName>
        <ecNumber>2.7.11.1</ecNumber>
    </recommendedName>
</protein>
<keyword id="KW-0067">ATP-binding</keyword>
<keyword id="KW-1003">Cell membrane</keyword>
<keyword id="KW-0418">Kinase</keyword>
<keyword id="KW-0472">Membrane</keyword>
<keyword id="KW-0547">Nucleotide-binding</keyword>
<keyword id="KW-0597">Phosphoprotein</keyword>
<keyword id="KW-1185">Reference proteome</keyword>
<keyword id="KW-0723">Serine/threonine-protein kinase</keyword>
<keyword id="KW-0808">Transferase</keyword>
<keyword id="KW-0812">Transmembrane</keyword>
<keyword id="KW-1133">Transmembrane helix</keyword>
<proteinExistence type="inferred from homology"/>
<feature type="chain" id="PRO_0000428052" description="Serine/threonine-protein kinase PknA">
    <location>
        <begin position="1"/>
        <end position="431"/>
    </location>
</feature>
<feature type="topological domain" description="Cytoplasmic" evidence="3">
    <location>
        <begin position="1"/>
        <end position="339"/>
    </location>
</feature>
<feature type="transmembrane region" description="Helical" evidence="3">
    <location>
        <begin position="340"/>
        <end position="360"/>
    </location>
</feature>
<feature type="topological domain" description="Extracellular" evidence="3">
    <location>
        <begin position="361"/>
        <end position="431"/>
    </location>
</feature>
<feature type="domain" description="Protein kinase" evidence="4">
    <location>
        <begin position="13"/>
        <end position="272"/>
    </location>
</feature>
<feature type="region of interest" description="Disordered" evidence="6">
    <location>
        <begin position="276"/>
        <end position="333"/>
    </location>
</feature>
<feature type="region of interest" description="Disordered" evidence="6">
    <location>
        <begin position="366"/>
        <end position="418"/>
    </location>
</feature>
<feature type="compositionally biased region" description="Pro residues" evidence="6">
    <location>
        <begin position="282"/>
        <end position="291"/>
    </location>
</feature>
<feature type="compositionally biased region" description="Low complexity" evidence="6">
    <location>
        <begin position="292"/>
        <end position="314"/>
    </location>
</feature>
<feature type="compositionally biased region" description="Low complexity" evidence="6">
    <location>
        <begin position="368"/>
        <end position="384"/>
    </location>
</feature>
<feature type="active site" description="Proton acceptor" evidence="4 5">
    <location>
        <position position="141"/>
    </location>
</feature>
<feature type="binding site" evidence="4">
    <location>
        <begin position="19"/>
        <end position="27"/>
    </location>
    <ligand>
        <name>ATP</name>
        <dbReference type="ChEBI" id="CHEBI:30616"/>
    </ligand>
</feature>
<feature type="binding site" evidence="4">
    <location>
        <position position="42"/>
    </location>
    <ligand>
        <name>ATP</name>
        <dbReference type="ChEBI" id="CHEBI:30616"/>
    </ligand>
</feature>
<organism>
    <name type="scientific">Mycobacterium tuberculosis (strain CDC 1551 / Oshkosh)</name>
    <dbReference type="NCBI Taxonomy" id="83331"/>
    <lineage>
        <taxon>Bacteria</taxon>
        <taxon>Bacillati</taxon>
        <taxon>Actinomycetota</taxon>
        <taxon>Actinomycetes</taxon>
        <taxon>Mycobacteriales</taxon>
        <taxon>Mycobacteriaceae</taxon>
        <taxon>Mycobacterium</taxon>
        <taxon>Mycobacterium tuberculosis complex</taxon>
    </lineage>
</organism>
<accession>P9WI82</accession>
<accession>L0T594</accession>
<accession>P65726</accession>
<accession>P71585</accession>
<name>PKNA_MYCTO</name>
<dbReference type="EC" id="2.7.11.1"/>
<dbReference type="EMBL" id="AE000516">
    <property type="protein sequence ID" value="AAK44240.1"/>
    <property type="molecule type" value="Genomic_DNA"/>
</dbReference>
<dbReference type="PIR" id="E70699">
    <property type="entry name" value="E70699"/>
</dbReference>
<dbReference type="RefSeq" id="WP_003400358.1">
    <property type="nucleotide sequence ID" value="NZ_KK341227.1"/>
</dbReference>
<dbReference type="SMR" id="P9WI82"/>
<dbReference type="GeneID" id="45423974"/>
<dbReference type="KEGG" id="mtc:MT0018"/>
<dbReference type="PATRIC" id="fig|83331.31.peg.19"/>
<dbReference type="HOGENOM" id="CLU_000288_63_44_11"/>
<dbReference type="Proteomes" id="UP000001020">
    <property type="component" value="Chromosome"/>
</dbReference>
<dbReference type="GO" id="GO:0005886">
    <property type="term" value="C:plasma membrane"/>
    <property type="evidence" value="ECO:0007669"/>
    <property type="project" value="UniProtKB-SubCell"/>
</dbReference>
<dbReference type="GO" id="GO:0005524">
    <property type="term" value="F:ATP binding"/>
    <property type="evidence" value="ECO:0007669"/>
    <property type="project" value="UniProtKB-KW"/>
</dbReference>
<dbReference type="GO" id="GO:0106310">
    <property type="term" value="F:protein serine kinase activity"/>
    <property type="evidence" value="ECO:0007669"/>
    <property type="project" value="RHEA"/>
</dbReference>
<dbReference type="GO" id="GO:0004674">
    <property type="term" value="F:protein serine/threonine kinase activity"/>
    <property type="evidence" value="ECO:0007669"/>
    <property type="project" value="UniProtKB-KW"/>
</dbReference>
<dbReference type="GO" id="GO:0080090">
    <property type="term" value="P:regulation of primary metabolic process"/>
    <property type="evidence" value="ECO:0007669"/>
    <property type="project" value="UniProtKB-ARBA"/>
</dbReference>
<dbReference type="CDD" id="cd14014">
    <property type="entry name" value="STKc_PknB_like"/>
    <property type="match status" value="1"/>
</dbReference>
<dbReference type="FunFam" id="1.10.510.10:FF:000021">
    <property type="entry name" value="Serine/threonine protein kinase"/>
    <property type="match status" value="1"/>
</dbReference>
<dbReference type="FunFam" id="3.30.200.20:FF:000035">
    <property type="entry name" value="Serine/threonine protein kinase Stk1"/>
    <property type="match status" value="1"/>
</dbReference>
<dbReference type="Gene3D" id="3.30.200.20">
    <property type="entry name" value="Phosphorylase Kinase, domain 1"/>
    <property type="match status" value="1"/>
</dbReference>
<dbReference type="Gene3D" id="1.10.510.10">
    <property type="entry name" value="Transferase(Phosphotransferase) domain 1"/>
    <property type="match status" value="1"/>
</dbReference>
<dbReference type="InterPro" id="IPR011009">
    <property type="entry name" value="Kinase-like_dom_sf"/>
</dbReference>
<dbReference type="InterPro" id="IPR000719">
    <property type="entry name" value="Prot_kinase_dom"/>
</dbReference>
<dbReference type="InterPro" id="IPR008271">
    <property type="entry name" value="Ser/Thr_kinase_AS"/>
</dbReference>
<dbReference type="PANTHER" id="PTHR43289">
    <property type="entry name" value="MITOGEN-ACTIVATED PROTEIN KINASE KINASE KINASE 20-RELATED"/>
    <property type="match status" value="1"/>
</dbReference>
<dbReference type="PANTHER" id="PTHR43289:SF6">
    <property type="entry name" value="SERINE_THREONINE-PROTEIN KINASE NEKL-3"/>
    <property type="match status" value="1"/>
</dbReference>
<dbReference type="Pfam" id="PF00069">
    <property type="entry name" value="Pkinase"/>
    <property type="match status" value="1"/>
</dbReference>
<dbReference type="SMART" id="SM00220">
    <property type="entry name" value="S_TKc"/>
    <property type="match status" value="1"/>
</dbReference>
<dbReference type="SUPFAM" id="SSF56112">
    <property type="entry name" value="Protein kinase-like (PK-like)"/>
    <property type="match status" value="1"/>
</dbReference>
<dbReference type="PROSITE" id="PS50011">
    <property type="entry name" value="PROTEIN_KINASE_DOM"/>
    <property type="match status" value="1"/>
</dbReference>
<dbReference type="PROSITE" id="PS00108">
    <property type="entry name" value="PROTEIN_KINASE_ST"/>
    <property type="match status" value="1"/>
</dbReference>
<gene>
    <name type="primary">pknA</name>
    <name type="ordered locus">MT0018</name>
</gene>
<evidence type="ECO:0000250" key="1"/>
<evidence type="ECO:0000250" key="2">
    <source>
        <dbReference type="UniProtKB" id="P9WI83"/>
    </source>
</evidence>
<evidence type="ECO:0000255" key="3"/>
<evidence type="ECO:0000255" key="4">
    <source>
        <dbReference type="PROSITE-ProRule" id="PRU00159"/>
    </source>
</evidence>
<evidence type="ECO:0000255" key="5">
    <source>
        <dbReference type="PROSITE-ProRule" id="PRU10027"/>
    </source>
</evidence>
<evidence type="ECO:0000256" key="6">
    <source>
        <dbReference type="SAM" id="MobiDB-lite"/>
    </source>
</evidence>
<sequence>MSPRVGVTLSGRYRLQRLIATGGMGQVWEAVDNRLGRRVAVKVLKSEFSSDPEFIERFRAEARTTAMLNHPGIASVHDYGESQMNGEGRTAYLVMELVNGEPLNSVLKRTGRLSLRHALDMLEQTGRALQIAHAAGLVHRDVKPGNILITPTGQVKITDFGIAKAVDAAPVTQTGMVMGTAQYIAPEQALGHDASPASDVYSLGVVGYEAVSGKRPFAGDGALTVAMKHIKEPPPPLPPDLPPNVRELIEITLVKNPAMRYRSGGPFADAVAAVRAGRRPPRPSQTPPPGRAAPAAIPSGTTARVAANSAGRTAASRRSRPATGGHRPPRRTFSSGQRALLWAAGVLGALAIIIAVLLVIKAPGDNSPQQAPTPTVTTTGNPPASNTGGTDASPRLNWTERGETRHSGLQSWVVPPTPHSRASLARYEIAQ</sequence>